<feature type="chain" id="PRO_1000134525" description="Acetyl-coenzyme A carboxylase carboxyl transferase subunit alpha">
    <location>
        <begin position="1"/>
        <end position="319"/>
    </location>
</feature>
<feature type="domain" description="CoA carboxyltransferase C-terminal" evidence="2">
    <location>
        <begin position="38"/>
        <end position="293"/>
    </location>
</feature>
<reference key="1">
    <citation type="submission" date="2008-06" db="EMBL/GenBank/DDBJ databases">
        <title>Complete sequence of Stenotrophomonas maltophilia R551-3.</title>
        <authorList>
            <consortium name="US DOE Joint Genome Institute"/>
            <person name="Lucas S."/>
            <person name="Copeland A."/>
            <person name="Lapidus A."/>
            <person name="Glavina del Rio T."/>
            <person name="Dalin E."/>
            <person name="Tice H."/>
            <person name="Pitluck S."/>
            <person name="Chain P."/>
            <person name="Malfatti S."/>
            <person name="Shin M."/>
            <person name="Vergez L."/>
            <person name="Lang D."/>
            <person name="Schmutz J."/>
            <person name="Larimer F."/>
            <person name="Land M."/>
            <person name="Hauser L."/>
            <person name="Kyrpides N."/>
            <person name="Mikhailova N."/>
            <person name="Taghavi S."/>
            <person name="Monchy S."/>
            <person name="Newman L."/>
            <person name="Vangronsveld J."/>
            <person name="van der Lelie D."/>
            <person name="Richardson P."/>
        </authorList>
    </citation>
    <scope>NUCLEOTIDE SEQUENCE [LARGE SCALE GENOMIC DNA]</scope>
    <source>
        <strain>R551-3</strain>
    </source>
</reference>
<protein>
    <recommendedName>
        <fullName evidence="1">Acetyl-coenzyme A carboxylase carboxyl transferase subunit alpha</fullName>
        <shortName evidence="1">ACCase subunit alpha</shortName>
        <shortName evidence="1">Acetyl-CoA carboxylase carboxyltransferase subunit alpha</shortName>
        <ecNumber evidence="1">2.1.3.15</ecNumber>
    </recommendedName>
</protein>
<sequence length="319" mass="35176">MNPNYLDFEQPIADLEAKIQELRNASAGPAVNVEAEVHALQDKLRLRTAQIFRNLTSWQVLQLARHPSRPYTADYLRVMFDEFQELAGDRAFADDKAIMGGLARINGRSVMVIGHQKGRDTKEKIKRNFGMPKPEGYRKALRLMKMAERFGLPVLTLIDTAGAWPGIDAESRGQSEAIARNLIEMAELKVPIICTVIGEGGSGGALALGVGDRTVMLEYAVYSTITPEGCASILWKDAGKAKDAAEQLGLTAPRLKSLGLVDKVVREPTGGAHRNPTQMAKRLKAVLLNELDALEKLSTEQLLEQRYTRLRSYGTYEAA</sequence>
<dbReference type="EC" id="2.1.3.15" evidence="1"/>
<dbReference type="EMBL" id="CP001111">
    <property type="protein sequence ID" value="ACF50954.1"/>
    <property type="molecule type" value="Genomic_DNA"/>
</dbReference>
<dbReference type="RefSeq" id="WP_012510504.1">
    <property type="nucleotide sequence ID" value="NC_011071.1"/>
</dbReference>
<dbReference type="SMR" id="B4SQ06"/>
<dbReference type="STRING" id="391008.Smal_1249"/>
<dbReference type="KEGG" id="smt:Smal_1249"/>
<dbReference type="eggNOG" id="COG0825">
    <property type="taxonomic scope" value="Bacteria"/>
</dbReference>
<dbReference type="HOGENOM" id="CLU_015486_0_2_6"/>
<dbReference type="OrthoDB" id="9808023at2"/>
<dbReference type="UniPathway" id="UPA00655">
    <property type="reaction ID" value="UER00711"/>
</dbReference>
<dbReference type="Proteomes" id="UP000001867">
    <property type="component" value="Chromosome"/>
</dbReference>
<dbReference type="GO" id="GO:0009317">
    <property type="term" value="C:acetyl-CoA carboxylase complex"/>
    <property type="evidence" value="ECO:0007669"/>
    <property type="project" value="InterPro"/>
</dbReference>
<dbReference type="GO" id="GO:0003989">
    <property type="term" value="F:acetyl-CoA carboxylase activity"/>
    <property type="evidence" value="ECO:0007669"/>
    <property type="project" value="InterPro"/>
</dbReference>
<dbReference type="GO" id="GO:0005524">
    <property type="term" value="F:ATP binding"/>
    <property type="evidence" value="ECO:0007669"/>
    <property type="project" value="UniProtKB-KW"/>
</dbReference>
<dbReference type="GO" id="GO:0016743">
    <property type="term" value="F:carboxyl- or carbamoyltransferase activity"/>
    <property type="evidence" value="ECO:0007669"/>
    <property type="project" value="UniProtKB-UniRule"/>
</dbReference>
<dbReference type="GO" id="GO:0006633">
    <property type="term" value="P:fatty acid biosynthetic process"/>
    <property type="evidence" value="ECO:0007669"/>
    <property type="project" value="UniProtKB-KW"/>
</dbReference>
<dbReference type="GO" id="GO:2001295">
    <property type="term" value="P:malonyl-CoA biosynthetic process"/>
    <property type="evidence" value="ECO:0007669"/>
    <property type="project" value="UniProtKB-UniRule"/>
</dbReference>
<dbReference type="Gene3D" id="3.90.226.10">
    <property type="entry name" value="2-enoyl-CoA Hydratase, Chain A, domain 1"/>
    <property type="match status" value="1"/>
</dbReference>
<dbReference type="HAMAP" id="MF_00823">
    <property type="entry name" value="AcetylCoA_CT_alpha"/>
    <property type="match status" value="1"/>
</dbReference>
<dbReference type="InterPro" id="IPR001095">
    <property type="entry name" value="Acetyl_CoA_COase_a_su"/>
</dbReference>
<dbReference type="InterPro" id="IPR029045">
    <property type="entry name" value="ClpP/crotonase-like_dom_sf"/>
</dbReference>
<dbReference type="InterPro" id="IPR011763">
    <property type="entry name" value="COA_CT_C"/>
</dbReference>
<dbReference type="NCBIfam" id="TIGR00513">
    <property type="entry name" value="accA"/>
    <property type="match status" value="1"/>
</dbReference>
<dbReference type="NCBIfam" id="NF041504">
    <property type="entry name" value="AccA_sub"/>
    <property type="match status" value="1"/>
</dbReference>
<dbReference type="NCBIfam" id="NF004344">
    <property type="entry name" value="PRK05724.1"/>
    <property type="match status" value="1"/>
</dbReference>
<dbReference type="PANTHER" id="PTHR42853">
    <property type="entry name" value="ACETYL-COENZYME A CARBOXYLASE CARBOXYL TRANSFERASE SUBUNIT ALPHA"/>
    <property type="match status" value="1"/>
</dbReference>
<dbReference type="PANTHER" id="PTHR42853:SF3">
    <property type="entry name" value="ACETYL-COENZYME A CARBOXYLASE CARBOXYL TRANSFERASE SUBUNIT ALPHA, CHLOROPLASTIC"/>
    <property type="match status" value="1"/>
</dbReference>
<dbReference type="Pfam" id="PF03255">
    <property type="entry name" value="ACCA"/>
    <property type="match status" value="1"/>
</dbReference>
<dbReference type="PRINTS" id="PR01069">
    <property type="entry name" value="ACCCTRFRASEA"/>
</dbReference>
<dbReference type="SUPFAM" id="SSF52096">
    <property type="entry name" value="ClpP/crotonase"/>
    <property type="match status" value="1"/>
</dbReference>
<dbReference type="PROSITE" id="PS50989">
    <property type="entry name" value="COA_CT_CTER"/>
    <property type="match status" value="1"/>
</dbReference>
<name>ACCA_STRM5</name>
<gene>
    <name evidence="1" type="primary">accA</name>
    <name type="ordered locus">Smal_1249</name>
</gene>
<accession>B4SQ06</accession>
<evidence type="ECO:0000255" key="1">
    <source>
        <dbReference type="HAMAP-Rule" id="MF_00823"/>
    </source>
</evidence>
<evidence type="ECO:0000255" key="2">
    <source>
        <dbReference type="PROSITE-ProRule" id="PRU01137"/>
    </source>
</evidence>
<comment type="function">
    <text evidence="1">Component of the acetyl coenzyme A carboxylase (ACC) complex. First, biotin carboxylase catalyzes the carboxylation of biotin on its carrier protein (BCCP) and then the CO(2) group is transferred by the carboxyltransferase to acetyl-CoA to form malonyl-CoA.</text>
</comment>
<comment type="catalytic activity">
    <reaction evidence="1">
        <text>N(6)-carboxybiotinyl-L-lysyl-[protein] + acetyl-CoA = N(6)-biotinyl-L-lysyl-[protein] + malonyl-CoA</text>
        <dbReference type="Rhea" id="RHEA:54728"/>
        <dbReference type="Rhea" id="RHEA-COMP:10505"/>
        <dbReference type="Rhea" id="RHEA-COMP:10506"/>
        <dbReference type="ChEBI" id="CHEBI:57288"/>
        <dbReference type="ChEBI" id="CHEBI:57384"/>
        <dbReference type="ChEBI" id="CHEBI:83144"/>
        <dbReference type="ChEBI" id="CHEBI:83145"/>
        <dbReference type="EC" id="2.1.3.15"/>
    </reaction>
</comment>
<comment type="pathway">
    <text evidence="1">Lipid metabolism; malonyl-CoA biosynthesis; malonyl-CoA from acetyl-CoA: step 1/1.</text>
</comment>
<comment type="subunit">
    <text evidence="1">Acetyl-CoA carboxylase is a heterohexamer composed of biotin carboxyl carrier protein (AccB), biotin carboxylase (AccC) and two subunits each of ACCase subunit alpha (AccA) and ACCase subunit beta (AccD).</text>
</comment>
<comment type="subcellular location">
    <subcellularLocation>
        <location evidence="1">Cytoplasm</location>
    </subcellularLocation>
</comment>
<comment type="similarity">
    <text evidence="1">Belongs to the AccA family.</text>
</comment>
<organism>
    <name type="scientific">Stenotrophomonas maltophilia (strain R551-3)</name>
    <dbReference type="NCBI Taxonomy" id="391008"/>
    <lineage>
        <taxon>Bacteria</taxon>
        <taxon>Pseudomonadati</taxon>
        <taxon>Pseudomonadota</taxon>
        <taxon>Gammaproteobacteria</taxon>
        <taxon>Lysobacterales</taxon>
        <taxon>Lysobacteraceae</taxon>
        <taxon>Stenotrophomonas</taxon>
        <taxon>Stenotrophomonas maltophilia group</taxon>
    </lineage>
</organism>
<proteinExistence type="inferred from homology"/>
<keyword id="KW-0067">ATP-binding</keyword>
<keyword id="KW-0963">Cytoplasm</keyword>
<keyword id="KW-0275">Fatty acid biosynthesis</keyword>
<keyword id="KW-0276">Fatty acid metabolism</keyword>
<keyword id="KW-0444">Lipid biosynthesis</keyword>
<keyword id="KW-0443">Lipid metabolism</keyword>
<keyword id="KW-0547">Nucleotide-binding</keyword>
<keyword id="KW-0808">Transferase</keyword>